<feature type="chain" id="PRO_0000390128" description="NADH-quinone oxidoreductase subunit K">
    <location>
        <begin position="1"/>
        <end position="99"/>
    </location>
</feature>
<feature type="transmembrane region" description="Helical" evidence="1">
    <location>
        <begin position="3"/>
        <end position="23"/>
    </location>
</feature>
<feature type="transmembrane region" description="Helical" evidence="1">
    <location>
        <begin position="28"/>
        <end position="48"/>
    </location>
</feature>
<feature type="transmembrane region" description="Helical" evidence="1">
    <location>
        <begin position="59"/>
        <end position="79"/>
    </location>
</feature>
<protein>
    <recommendedName>
        <fullName evidence="1">NADH-quinone oxidoreductase subunit K</fullName>
        <ecNumber evidence="1">7.1.1.-</ecNumber>
    </recommendedName>
    <alternativeName>
        <fullName evidence="1">NADH dehydrogenase I subunit K</fullName>
    </alternativeName>
    <alternativeName>
        <fullName evidence="1">NDH-1 subunit K</fullName>
    </alternativeName>
</protein>
<keyword id="KW-1003">Cell membrane</keyword>
<keyword id="KW-0472">Membrane</keyword>
<keyword id="KW-0520">NAD</keyword>
<keyword id="KW-0874">Quinone</keyword>
<keyword id="KW-1278">Translocase</keyword>
<keyword id="KW-0812">Transmembrane</keyword>
<keyword id="KW-1133">Transmembrane helix</keyword>
<keyword id="KW-0813">Transport</keyword>
<sequence length="99" mass="10807">MNPDNYLYLSALLFTIGAAGVLLRRNAIVMFMCVELMLNAGNLAFVTFARVHGNLDGQVVAFFTMVVAACEVVIGLAIIMTIFRTRRSANVDAASLLRH</sequence>
<reference key="1">
    <citation type="submission" date="2007-04" db="EMBL/GenBank/DDBJ databases">
        <title>Complete sequence of chromosome of Mycobacterium gilvum PYR-GCK.</title>
        <authorList>
            <consortium name="US DOE Joint Genome Institute"/>
            <person name="Copeland A."/>
            <person name="Lucas S."/>
            <person name="Lapidus A."/>
            <person name="Barry K."/>
            <person name="Detter J.C."/>
            <person name="Glavina del Rio T."/>
            <person name="Hammon N."/>
            <person name="Israni S."/>
            <person name="Dalin E."/>
            <person name="Tice H."/>
            <person name="Pitluck S."/>
            <person name="Chain P."/>
            <person name="Malfatti S."/>
            <person name="Shin M."/>
            <person name="Vergez L."/>
            <person name="Schmutz J."/>
            <person name="Larimer F."/>
            <person name="Land M."/>
            <person name="Hauser L."/>
            <person name="Kyrpides N."/>
            <person name="Mikhailova N."/>
            <person name="Miller C."/>
            <person name="Richardson P."/>
        </authorList>
    </citation>
    <scope>NUCLEOTIDE SEQUENCE [LARGE SCALE GENOMIC DNA]</scope>
    <source>
        <strain>PYR-GCK</strain>
    </source>
</reference>
<gene>
    <name evidence="1" type="primary">nuoK</name>
    <name type="ordered locus">Mflv_4491</name>
</gene>
<name>NUOK_MYCGI</name>
<dbReference type="EC" id="7.1.1.-" evidence="1"/>
<dbReference type="EMBL" id="CP000656">
    <property type="protein sequence ID" value="ABP46960.1"/>
    <property type="molecule type" value="Genomic_DNA"/>
</dbReference>
<dbReference type="SMR" id="A4TDA1"/>
<dbReference type="STRING" id="350054.Mflv_4491"/>
<dbReference type="KEGG" id="mgi:Mflv_4491"/>
<dbReference type="eggNOG" id="COG0713">
    <property type="taxonomic scope" value="Bacteria"/>
</dbReference>
<dbReference type="HOGENOM" id="CLU_144724_0_0_11"/>
<dbReference type="OrthoDB" id="9810120at2"/>
<dbReference type="GO" id="GO:0030964">
    <property type="term" value="C:NADH dehydrogenase complex"/>
    <property type="evidence" value="ECO:0007669"/>
    <property type="project" value="TreeGrafter"/>
</dbReference>
<dbReference type="GO" id="GO:0005886">
    <property type="term" value="C:plasma membrane"/>
    <property type="evidence" value="ECO:0007669"/>
    <property type="project" value="UniProtKB-SubCell"/>
</dbReference>
<dbReference type="GO" id="GO:0050136">
    <property type="term" value="F:NADH:ubiquinone reductase (non-electrogenic) activity"/>
    <property type="evidence" value="ECO:0007669"/>
    <property type="project" value="UniProtKB-UniRule"/>
</dbReference>
<dbReference type="GO" id="GO:0048038">
    <property type="term" value="F:quinone binding"/>
    <property type="evidence" value="ECO:0007669"/>
    <property type="project" value="UniProtKB-KW"/>
</dbReference>
<dbReference type="GO" id="GO:0042773">
    <property type="term" value="P:ATP synthesis coupled electron transport"/>
    <property type="evidence" value="ECO:0007669"/>
    <property type="project" value="InterPro"/>
</dbReference>
<dbReference type="FunFam" id="1.10.287.3510:FF:000001">
    <property type="entry name" value="NADH-quinone oxidoreductase subunit K"/>
    <property type="match status" value="1"/>
</dbReference>
<dbReference type="Gene3D" id="1.10.287.3510">
    <property type="match status" value="1"/>
</dbReference>
<dbReference type="HAMAP" id="MF_01456">
    <property type="entry name" value="NDH1_NuoK"/>
    <property type="match status" value="1"/>
</dbReference>
<dbReference type="InterPro" id="IPR001133">
    <property type="entry name" value="NADH_UbQ_OxRdtase_chain4L/K"/>
</dbReference>
<dbReference type="InterPro" id="IPR039428">
    <property type="entry name" value="NUOK/Mnh_C1-like"/>
</dbReference>
<dbReference type="NCBIfam" id="NF004320">
    <property type="entry name" value="PRK05715.1-2"/>
    <property type="match status" value="1"/>
</dbReference>
<dbReference type="PANTHER" id="PTHR11434:SF21">
    <property type="entry name" value="NADH DEHYDROGENASE SUBUNIT 4L-RELATED"/>
    <property type="match status" value="1"/>
</dbReference>
<dbReference type="PANTHER" id="PTHR11434">
    <property type="entry name" value="NADH-UBIQUINONE OXIDOREDUCTASE SUBUNIT ND4L"/>
    <property type="match status" value="1"/>
</dbReference>
<dbReference type="Pfam" id="PF00420">
    <property type="entry name" value="Oxidored_q2"/>
    <property type="match status" value="1"/>
</dbReference>
<organism>
    <name type="scientific">Mycolicibacterium gilvum (strain PYR-GCK)</name>
    <name type="common">Mycobacterium gilvum (strain PYR-GCK)</name>
    <dbReference type="NCBI Taxonomy" id="350054"/>
    <lineage>
        <taxon>Bacteria</taxon>
        <taxon>Bacillati</taxon>
        <taxon>Actinomycetota</taxon>
        <taxon>Actinomycetes</taxon>
        <taxon>Mycobacteriales</taxon>
        <taxon>Mycobacteriaceae</taxon>
        <taxon>Mycolicibacterium</taxon>
    </lineage>
</organism>
<proteinExistence type="inferred from homology"/>
<comment type="function">
    <text evidence="1">NDH-1 shuttles electrons from NADH, via FMN and iron-sulfur (Fe-S) centers, to quinones in the respiratory chain. The immediate electron acceptor for the enzyme in this species is believed to be a menaquinone. Couples the redox reaction to proton translocation (for every two electrons transferred, four hydrogen ions are translocated across the cytoplasmic membrane), and thus conserves the redox energy in a proton gradient.</text>
</comment>
<comment type="catalytic activity">
    <reaction evidence="1">
        <text>a quinone + NADH + 5 H(+)(in) = a quinol + NAD(+) + 4 H(+)(out)</text>
        <dbReference type="Rhea" id="RHEA:57888"/>
        <dbReference type="ChEBI" id="CHEBI:15378"/>
        <dbReference type="ChEBI" id="CHEBI:24646"/>
        <dbReference type="ChEBI" id="CHEBI:57540"/>
        <dbReference type="ChEBI" id="CHEBI:57945"/>
        <dbReference type="ChEBI" id="CHEBI:132124"/>
    </reaction>
</comment>
<comment type="subunit">
    <text evidence="1">NDH-1 is composed of 14 different subunits. Subunits NuoA, H, J, K, L, M, N constitute the membrane sector of the complex.</text>
</comment>
<comment type="subcellular location">
    <subcellularLocation>
        <location evidence="1">Cell membrane</location>
        <topology evidence="1">Multi-pass membrane protein</topology>
    </subcellularLocation>
</comment>
<comment type="similarity">
    <text evidence="1">Belongs to the complex I subunit 4L family.</text>
</comment>
<accession>A4TDA1</accession>
<evidence type="ECO:0000255" key="1">
    <source>
        <dbReference type="HAMAP-Rule" id="MF_01456"/>
    </source>
</evidence>